<gene>
    <name evidence="1" type="primary">rlmC</name>
    <name type="synonym">rumB</name>
    <name type="ordered locus">STY0915</name>
    <name type="ordered locus">t2014</name>
</gene>
<name>RLMC_SALTI</name>
<keyword id="KW-0004">4Fe-4S</keyword>
<keyword id="KW-0408">Iron</keyword>
<keyword id="KW-0411">Iron-sulfur</keyword>
<keyword id="KW-0479">Metal-binding</keyword>
<keyword id="KW-0489">Methyltransferase</keyword>
<keyword id="KW-0698">rRNA processing</keyword>
<keyword id="KW-0949">S-adenosyl-L-methionine</keyword>
<keyword id="KW-0808">Transferase</keyword>
<reference key="1">
    <citation type="journal article" date="2001" name="Nature">
        <title>Complete genome sequence of a multiple drug resistant Salmonella enterica serovar Typhi CT18.</title>
        <authorList>
            <person name="Parkhill J."/>
            <person name="Dougan G."/>
            <person name="James K.D."/>
            <person name="Thomson N.R."/>
            <person name="Pickard D."/>
            <person name="Wain J."/>
            <person name="Churcher C.M."/>
            <person name="Mungall K.L."/>
            <person name="Bentley S.D."/>
            <person name="Holden M.T.G."/>
            <person name="Sebaihia M."/>
            <person name="Baker S."/>
            <person name="Basham D."/>
            <person name="Brooks K."/>
            <person name="Chillingworth T."/>
            <person name="Connerton P."/>
            <person name="Cronin A."/>
            <person name="Davis P."/>
            <person name="Davies R.M."/>
            <person name="Dowd L."/>
            <person name="White N."/>
            <person name="Farrar J."/>
            <person name="Feltwell T."/>
            <person name="Hamlin N."/>
            <person name="Haque A."/>
            <person name="Hien T.T."/>
            <person name="Holroyd S."/>
            <person name="Jagels K."/>
            <person name="Krogh A."/>
            <person name="Larsen T.S."/>
            <person name="Leather S."/>
            <person name="Moule S."/>
            <person name="O'Gaora P."/>
            <person name="Parry C."/>
            <person name="Quail M.A."/>
            <person name="Rutherford K.M."/>
            <person name="Simmonds M."/>
            <person name="Skelton J."/>
            <person name="Stevens K."/>
            <person name="Whitehead S."/>
            <person name="Barrell B.G."/>
        </authorList>
    </citation>
    <scope>NUCLEOTIDE SEQUENCE [LARGE SCALE GENOMIC DNA]</scope>
    <source>
        <strain>CT18</strain>
    </source>
</reference>
<reference key="2">
    <citation type="journal article" date="2003" name="J. Bacteriol.">
        <title>Comparative genomics of Salmonella enterica serovar Typhi strains Ty2 and CT18.</title>
        <authorList>
            <person name="Deng W."/>
            <person name="Liou S.-R."/>
            <person name="Plunkett G. III"/>
            <person name="Mayhew G.F."/>
            <person name="Rose D.J."/>
            <person name="Burland V."/>
            <person name="Kodoyianni V."/>
            <person name="Schwartz D.C."/>
            <person name="Blattner F.R."/>
        </authorList>
    </citation>
    <scope>NUCLEOTIDE SEQUENCE [LARGE SCALE GENOMIC DNA]</scope>
    <source>
        <strain>ATCC 700931 / Ty2</strain>
    </source>
</reference>
<proteinExistence type="inferred from homology"/>
<sequence>MQCALYDAGRCRSCQWITQSVNEQLSAKTADLHRLLAGLPVEQWCAPISGPEQHFRNKAKMVVSGSVEKPLFGMLHRDGTPVDLCACPLYPASFAPVFSALKPFIARAGLTPYNVARKRGELKYLLLTESQFDGGMMLRFVLRSETKLTQLRAALPWLRAQLPQLRVITANIQPVHMAIMEGETEIYLTDQQALAERFNDVPLWIRPQSFFQTNPTVASRLYATARDWVGQLPVRHMWDLFCGVGGFGLHCATPQMQLTGIEIAPEAIACAKQSAAELGLTRLHFQALDSTQFATAQGETPDLVLVNPPRRGIGKPLCDYLAQMAPRFIIYSSCNAQTMAQDIRHLPNYRIQRVQLFDMFPHTAHYEVLTLLCRL</sequence>
<comment type="function">
    <text evidence="1">Catalyzes the formation of 5-methyl-uridine at position 747 (m5U747) in 23S rRNA.</text>
</comment>
<comment type="catalytic activity">
    <reaction evidence="1">
        <text>uridine(747) in 23S rRNA + S-adenosyl-L-methionine = 5-methyluridine(747) in 23S rRNA + S-adenosyl-L-homocysteine + H(+)</text>
        <dbReference type="Rhea" id="RHEA:42628"/>
        <dbReference type="Rhea" id="RHEA-COMP:10154"/>
        <dbReference type="Rhea" id="RHEA-COMP:10155"/>
        <dbReference type="ChEBI" id="CHEBI:15378"/>
        <dbReference type="ChEBI" id="CHEBI:57856"/>
        <dbReference type="ChEBI" id="CHEBI:59789"/>
        <dbReference type="ChEBI" id="CHEBI:65315"/>
        <dbReference type="ChEBI" id="CHEBI:74447"/>
        <dbReference type="EC" id="2.1.1.189"/>
    </reaction>
</comment>
<comment type="similarity">
    <text evidence="1">Belongs to the class I-like SAM-binding methyltransferase superfamily. RNA M5U methyltransferase family. RlmC subfamily.</text>
</comment>
<organism>
    <name type="scientific">Salmonella typhi</name>
    <dbReference type="NCBI Taxonomy" id="90370"/>
    <lineage>
        <taxon>Bacteria</taxon>
        <taxon>Pseudomonadati</taxon>
        <taxon>Pseudomonadota</taxon>
        <taxon>Gammaproteobacteria</taxon>
        <taxon>Enterobacterales</taxon>
        <taxon>Enterobacteriaceae</taxon>
        <taxon>Salmonella</taxon>
    </lineage>
</organism>
<evidence type="ECO:0000255" key="1">
    <source>
        <dbReference type="HAMAP-Rule" id="MF_01012"/>
    </source>
</evidence>
<feature type="chain" id="PRO_0000161934" description="23S rRNA (uracil(747)-C(5))-methyltransferase RlmC">
    <location>
        <begin position="1"/>
        <end position="375"/>
    </location>
</feature>
<feature type="active site" description="Nucleophile" evidence="1">
    <location>
        <position position="334"/>
    </location>
</feature>
<feature type="binding site" evidence="1">
    <location>
        <position position="3"/>
    </location>
    <ligand>
        <name>[4Fe-4S] cluster</name>
        <dbReference type="ChEBI" id="CHEBI:49883"/>
    </ligand>
</feature>
<feature type="binding site" evidence="1">
    <location>
        <position position="11"/>
    </location>
    <ligand>
        <name>[4Fe-4S] cluster</name>
        <dbReference type="ChEBI" id="CHEBI:49883"/>
    </ligand>
</feature>
<feature type="binding site" evidence="1">
    <location>
        <position position="14"/>
    </location>
    <ligand>
        <name>[4Fe-4S] cluster</name>
        <dbReference type="ChEBI" id="CHEBI:49883"/>
    </ligand>
</feature>
<feature type="binding site" evidence="1">
    <location>
        <position position="87"/>
    </location>
    <ligand>
        <name>[4Fe-4S] cluster</name>
        <dbReference type="ChEBI" id="CHEBI:49883"/>
    </ligand>
</feature>
<feature type="binding site" evidence="1">
    <location>
        <position position="212"/>
    </location>
    <ligand>
        <name>S-adenosyl-L-methionine</name>
        <dbReference type="ChEBI" id="CHEBI:59789"/>
    </ligand>
</feature>
<feature type="binding site" evidence="1">
    <location>
        <position position="241"/>
    </location>
    <ligand>
        <name>S-adenosyl-L-methionine</name>
        <dbReference type="ChEBI" id="CHEBI:59789"/>
    </ligand>
</feature>
<feature type="binding site" evidence="1">
    <location>
        <position position="262"/>
    </location>
    <ligand>
        <name>S-adenosyl-L-methionine</name>
        <dbReference type="ChEBI" id="CHEBI:59789"/>
    </ligand>
</feature>
<feature type="binding site" evidence="1">
    <location>
        <position position="307"/>
    </location>
    <ligand>
        <name>S-adenosyl-L-methionine</name>
        <dbReference type="ChEBI" id="CHEBI:59789"/>
    </ligand>
</feature>
<dbReference type="EC" id="2.1.1.189" evidence="1"/>
<dbReference type="EMBL" id="AL513382">
    <property type="protein sequence ID" value="CAD05321.1"/>
    <property type="molecule type" value="Genomic_DNA"/>
</dbReference>
<dbReference type="EMBL" id="AE014613">
    <property type="protein sequence ID" value="AAO69626.1"/>
    <property type="molecule type" value="Genomic_DNA"/>
</dbReference>
<dbReference type="RefSeq" id="NP_455409.1">
    <property type="nucleotide sequence ID" value="NC_003198.1"/>
</dbReference>
<dbReference type="RefSeq" id="WP_001149787.1">
    <property type="nucleotide sequence ID" value="NZ_WSUR01000019.1"/>
</dbReference>
<dbReference type="SMR" id="Q8Z841"/>
<dbReference type="STRING" id="220341.gene:17584911"/>
<dbReference type="KEGG" id="stt:t2014"/>
<dbReference type="KEGG" id="sty:STY0915"/>
<dbReference type="PATRIC" id="fig|220341.7.peg.924"/>
<dbReference type="eggNOG" id="COG2265">
    <property type="taxonomic scope" value="Bacteria"/>
</dbReference>
<dbReference type="HOGENOM" id="CLU_014689_0_0_6"/>
<dbReference type="OMA" id="SCQWLEK"/>
<dbReference type="OrthoDB" id="9804590at2"/>
<dbReference type="Proteomes" id="UP000000541">
    <property type="component" value="Chromosome"/>
</dbReference>
<dbReference type="Proteomes" id="UP000002670">
    <property type="component" value="Chromosome"/>
</dbReference>
<dbReference type="GO" id="GO:0051539">
    <property type="term" value="F:4 iron, 4 sulfur cluster binding"/>
    <property type="evidence" value="ECO:0007669"/>
    <property type="project" value="UniProtKB-KW"/>
</dbReference>
<dbReference type="GO" id="GO:0005506">
    <property type="term" value="F:iron ion binding"/>
    <property type="evidence" value="ECO:0007669"/>
    <property type="project" value="UniProtKB-UniRule"/>
</dbReference>
<dbReference type="GO" id="GO:0070041">
    <property type="term" value="F:rRNA (uridine-C5-)-methyltransferase activity"/>
    <property type="evidence" value="ECO:0007669"/>
    <property type="project" value="UniProtKB-UniRule"/>
</dbReference>
<dbReference type="GO" id="GO:0070475">
    <property type="term" value="P:rRNA base methylation"/>
    <property type="evidence" value="ECO:0007669"/>
    <property type="project" value="TreeGrafter"/>
</dbReference>
<dbReference type="CDD" id="cd02440">
    <property type="entry name" value="AdoMet_MTases"/>
    <property type="match status" value="1"/>
</dbReference>
<dbReference type="FunFam" id="2.40.50.1070:FF:000002">
    <property type="entry name" value="23S rRNA (uracil(747)-C(5))-methyltransferase RlmC"/>
    <property type="match status" value="1"/>
</dbReference>
<dbReference type="FunFam" id="3.40.50.150:FF:000049">
    <property type="entry name" value="23S rRNA (uracil(747)-C(5))-methyltransferase RlmC"/>
    <property type="match status" value="1"/>
</dbReference>
<dbReference type="Gene3D" id="2.40.50.1070">
    <property type="match status" value="1"/>
</dbReference>
<dbReference type="Gene3D" id="3.40.50.150">
    <property type="entry name" value="Vaccinia Virus protein VP39"/>
    <property type="match status" value="1"/>
</dbReference>
<dbReference type="HAMAP" id="MF_01012">
    <property type="entry name" value="23SrRNA_methyltr_RlmC"/>
    <property type="match status" value="1"/>
</dbReference>
<dbReference type="InterPro" id="IPR011825">
    <property type="entry name" value="23SrRNA_MeTrfase_RlmC"/>
</dbReference>
<dbReference type="InterPro" id="IPR030390">
    <property type="entry name" value="MeTrfase_TrmA_AS"/>
</dbReference>
<dbReference type="InterPro" id="IPR030391">
    <property type="entry name" value="MeTrfase_TrmA_CS"/>
</dbReference>
<dbReference type="InterPro" id="IPR029063">
    <property type="entry name" value="SAM-dependent_MTases_sf"/>
</dbReference>
<dbReference type="InterPro" id="IPR010280">
    <property type="entry name" value="U5_MeTrfase_fam"/>
</dbReference>
<dbReference type="NCBIfam" id="TIGR02085">
    <property type="entry name" value="meth_trns_rumB"/>
    <property type="match status" value="1"/>
</dbReference>
<dbReference type="PANTHER" id="PTHR11061">
    <property type="entry name" value="RNA M5U METHYLTRANSFERASE"/>
    <property type="match status" value="1"/>
</dbReference>
<dbReference type="PANTHER" id="PTHR11061:SF30">
    <property type="entry name" value="TRNA (URACIL(54)-C(5))-METHYLTRANSFERASE"/>
    <property type="match status" value="1"/>
</dbReference>
<dbReference type="Pfam" id="PF05958">
    <property type="entry name" value="tRNA_U5-meth_tr"/>
    <property type="match status" value="1"/>
</dbReference>
<dbReference type="SUPFAM" id="SSF53335">
    <property type="entry name" value="S-adenosyl-L-methionine-dependent methyltransferases"/>
    <property type="match status" value="1"/>
</dbReference>
<dbReference type="PROSITE" id="PS51687">
    <property type="entry name" value="SAM_MT_RNA_M5U"/>
    <property type="match status" value="1"/>
</dbReference>
<dbReference type="PROSITE" id="PS01230">
    <property type="entry name" value="TRMA_1"/>
    <property type="match status" value="1"/>
</dbReference>
<dbReference type="PROSITE" id="PS01231">
    <property type="entry name" value="TRMA_2"/>
    <property type="match status" value="1"/>
</dbReference>
<accession>Q8Z841</accession>
<protein>
    <recommendedName>
        <fullName evidence="1">23S rRNA (uracil(747)-C(5))-methyltransferase RlmC</fullName>
        <ecNumber evidence="1">2.1.1.189</ecNumber>
    </recommendedName>
    <alternativeName>
        <fullName evidence="1">23S rRNA(m5U747)-methyltransferase</fullName>
    </alternativeName>
</protein>